<organism>
    <name type="scientific">Actinobacillus pleuropneumoniae serotype 5b (strain L20)</name>
    <dbReference type="NCBI Taxonomy" id="416269"/>
    <lineage>
        <taxon>Bacteria</taxon>
        <taxon>Pseudomonadati</taxon>
        <taxon>Pseudomonadota</taxon>
        <taxon>Gammaproteobacteria</taxon>
        <taxon>Pasteurellales</taxon>
        <taxon>Pasteurellaceae</taxon>
        <taxon>Actinobacillus</taxon>
    </lineage>
</organism>
<name>MUKF_ACTP2</name>
<keyword id="KW-0106">Calcium</keyword>
<keyword id="KW-0131">Cell cycle</keyword>
<keyword id="KW-0132">Cell division</keyword>
<keyword id="KW-0159">Chromosome partition</keyword>
<keyword id="KW-0963">Cytoplasm</keyword>
<keyword id="KW-0226">DNA condensation</keyword>
<keyword id="KW-1185">Reference proteome</keyword>
<sequence length="443" mass="50766">MQNELAQTIPELINWTKEREFSLSLSSDRLAFLLAISIYNNEQTDGELLESDLIDLFRYVSEVFDQSEATLTQRANNAINDLVKQRFLNRFSSEFTEGLAIYRITPLGVGVADYYVRQREFSTLRLSIQLSIVADEIQRASSAAEEGGDERFWRNNVFAPLKYSVAEIFDSIDLSQRMMDENQHQIRERIAELLSQNWHEAILSCEQLLDETSGNLRELQDTLNAAGDKLQAQLLRIQSCLIGRDDLDFVDQLIVNLQNKLDRIISWGQQAIDLWIGYDRHVHKFIRTAIDMDKNRVFGQRLRQSIQDYFKCALVTLYCEAESLLDLRDDETMLNEAEAVGELPSELEYESLSDVQEQIISVMQAHLAPFRAEGKPIDLGAVLREQLALYPQSRHFDVARIIVDQAVKLGMASLDSQAVYPEWQAINDKGAEVQANVIDQYNK</sequence>
<evidence type="ECO:0000255" key="1">
    <source>
        <dbReference type="HAMAP-Rule" id="MF_01803"/>
    </source>
</evidence>
<reference key="1">
    <citation type="journal article" date="2008" name="J. Bacteriol.">
        <title>The complete genome sequence of Actinobacillus pleuropneumoniae L20 (serotype 5b).</title>
        <authorList>
            <person name="Foote S.J."/>
            <person name="Bosse J.T."/>
            <person name="Bouevitch A.B."/>
            <person name="Langford P.R."/>
            <person name="Young N.M."/>
            <person name="Nash J.H.E."/>
        </authorList>
    </citation>
    <scope>NUCLEOTIDE SEQUENCE [LARGE SCALE GENOMIC DNA]</scope>
    <source>
        <strain>L20</strain>
    </source>
</reference>
<gene>
    <name evidence="1" type="primary">mukF</name>
    <name type="ordered locus">APL_0579</name>
</gene>
<accession>A3MZU5</accession>
<comment type="function">
    <text evidence="1">Involved in chromosome condensation, segregation and cell cycle progression. May participate in facilitating chromosome segregation by condensation DNA from both sides of a centrally located replisome during cell division. Not required for mini-F plasmid partitioning. Probably acts via its interaction with MukB and MukE. Overexpression results in anucleate cells. It has a calcium binding activity.</text>
</comment>
<comment type="subunit">
    <text evidence="1">Interacts, and probably forms a ternary complex, with MukE and MukB via its C-terminal region. The complex formation is stimulated by calcium or magnesium. It is required for an interaction between MukE and MukB.</text>
</comment>
<comment type="subcellular location">
    <subcellularLocation>
        <location evidence="1">Cytoplasm</location>
        <location evidence="1">Nucleoid</location>
    </subcellularLocation>
    <text evidence="1">Restricted to the nucleoid region.</text>
</comment>
<comment type="similarity">
    <text evidence="1">Belongs to the MukF family.</text>
</comment>
<feature type="chain" id="PRO_1000069924" description="Chromosome partition protein MukF">
    <location>
        <begin position="1"/>
        <end position="443"/>
    </location>
</feature>
<feature type="region of interest" description="Leucine-zipper">
    <location>
        <begin position="209"/>
        <end position="237"/>
    </location>
</feature>
<protein>
    <recommendedName>
        <fullName evidence="1">Chromosome partition protein MukF</fullName>
    </recommendedName>
</protein>
<dbReference type="EMBL" id="CP000569">
    <property type="protein sequence ID" value="ABN73681.1"/>
    <property type="molecule type" value="Genomic_DNA"/>
</dbReference>
<dbReference type="RefSeq" id="WP_011848432.1">
    <property type="nucleotide sequence ID" value="NC_009053.1"/>
</dbReference>
<dbReference type="SMR" id="A3MZU5"/>
<dbReference type="STRING" id="416269.APL_0579"/>
<dbReference type="EnsemblBacteria" id="ABN73681">
    <property type="protein sequence ID" value="ABN73681"/>
    <property type="gene ID" value="APL_0579"/>
</dbReference>
<dbReference type="KEGG" id="apl:APL_0579"/>
<dbReference type="PATRIC" id="fig|416269.6.peg.610"/>
<dbReference type="eggNOG" id="COG3006">
    <property type="taxonomic scope" value="Bacteria"/>
</dbReference>
<dbReference type="HOGENOM" id="CLU_049853_0_0_6"/>
<dbReference type="Proteomes" id="UP000001432">
    <property type="component" value="Chromosome"/>
</dbReference>
<dbReference type="GO" id="GO:0005737">
    <property type="term" value="C:cytoplasm"/>
    <property type="evidence" value="ECO:0007669"/>
    <property type="project" value="UniProtKB-UniRule"/>
</dbReference>
<dbReference type="GO" id="GO:0009295">
    <property type="term" value="C:nucleoid"/>
    <property type="evidence" value="ECO:0007669"/>
    <property type="project" value="UniProtKB-SubCell"/>
</dbReference>
<dbReference type="GO" id="GO:0005509">
    <property type="term" value="F:calcium ion binding"/>
    <property type="evidence" value="ECO:0007669"/>
    <property type="project" value="UniProtKB-UniRule"/>
</dbReference>
<dbReference type="GO" id="GO:0051301">
    <property type="term" value="P:cell division"/>
    <property type="evidence" value="ECO:0007669"/>
    <property type="project" value="UniProtKB-KW"/>
</dbReference>
<dbReference type="GO" id="GO:0030261">
    <property type="term" value="P:chromosome condensation"/>
    <property type="evidence" value="ECO:0007669"/>
    <property type="project" value="UniProtKB-KW"/>
</dbReference>
<dbReference type="GO" id="GO:0007059">
    <property type="term" value="P:chromosome segregation"/>
    <property type="evidence" value="ECO:0007669"/>
    <property type="project" value="UniProtKB-UniRule"/>
</dbReference>
<dbReference type="GO" id="GO:0006260">
    <property type="term" value="P:DNA replication"/>
    <property type="evidence" value="ECO:0007669"/>
    <property type="project" value="UniProtKB-UniRule"/>
</dbReference>
<dbReference type="CDD" id="cd16337">
    <property type="entry name" value="MukF_C"/>
    <property type="match status" value="1"/>
</dbReference>
<dbReference type="Gene3D" id="1.20.58.590">
    <property type="entry name" value="Chromosome partition protein MukF, middle domain"/>
    <property type="match status" value="1"/>
</dbReference>
<dbReference type="Gene3D" id="1.10.225.40">
    <property type="entry name" value="MukF, C-terminal domain"/>
    <property type="match status" value="1"/>
</dbReference>
<dbReference type="Gene3D" id="1.10.10.10">
    <property type="entry name" value="Winged helix-like DNA-binding domain superfamily/Winged helix DNA-binding domain"/>
    <property type="match status" value="1"/>
</dbReference>
<dbReference type="HAMAP" id="MF_01803">
    <property type="entry name" value="MukF"/>
    <property type="match status" value="1"/>
</dbReference>
<dbReference type="InterPro" id="IPR005582">
    <property type="entry name" value="Chromosome_partition_MukF"/>
</dbReference>
<dbReference type="InterPro" id="IPR033441">
    <property type="entry name" value="MukF_C"/>
</dbReference>
<dbReference type="InterPro" id="IPR038198">
    <property type="entry name" value="MukF_C_sf"/>
</dbReference>
<dbReference type="InterPro" id="IPR033440">
    <property type="entry name" value="MukF_M"/>
</dbReference>
<dbReference type="InterPro" id="IPR036141">
    <property type="entry name" value="MukF_M_sp"/>
</dbReference>
<dbReference type="InterPro" id="IPR033439">
    <property type="entry name" value="MukF_WHTH"/>
</dbReference>
<dbReference type="InterPro" id="IPR036388">
    <property type="entry name" value="WH-like_DNA-bd_sf"/>
</dbReference>
<dbReference type="InterPro" id="IPR036390">
    <property type="entry name" value="WH_DNA-bd_sf"/>
</dbReference>
<dbReference type="NCBIfam" id="NF003615">
    <property type="entry name" value="PRK05260.1"/>
    <property type="match status" value="1"/>
</dbReference>
<dbReference type="Pfam" id="PF03882">
    <property type="entry name" value="KicB"/>
    <property type="match status" value="1"/>
</dbReference>
<dbReference type="Pfam" id="PF17193">
    <property type="entry name" value="MukF_C"/>
    <property type="match status" value="1"/>
</dbReference>
<dbReference type="Pfam" id="PF17192">
    <property type="entry name" value="MukF_M"/>
    <property type="match status" value="1"/>
</dbReference>
<dbReference type="PIRSF" id="PIRSF018282">
    <property type="entry name" value="MukF"/>
    <property type="match status" value="1"/>
</dbReference>
<dbReference type="SUPFAM" id="SSF140570">
    <property type="entry name" value="MukF C-terminal domain-like"/>
    <property type="match status" value="1"/>
</dbReference>
<dbReference type="SUPFAM" id="SSF46785">
    <property type="entry name" value="Winged helix' DNA-binding domain"/>
    <property type="match status" value="1"/>
</dbReference>
<proteinExistence type="inferred from homology"/>